<name>THIB_CANTR</name>
<keyword id="KW-0012">Acyltransferase</keyword>
<keyword id="KW-0903">Direct protein sequencing</keyword>
<keyword id="KW-0576">Peroxisome</keyword>
<keyword id="KW-0808">Transferase</keyword>
<sequence>MTLPPVYIVSTARTPIGSFQGSLSSLTYSDLGAHAVKAALAKVPQIKPQDVDEIVFGGVLQANVGQAPARQVALKAGLPDSIIASTINKVCASGMKAVIIGAQNIICGTSDIVVVGGAESMSNTPYYLPSARSGARYGDAVMVDGVQKDGLLDVYEEKLMGVAAEKCAKDHGFSREDQDNFAINSYKKAGKALSEGKFKSEIAPVTIKGFRGKPDTVIENDEEIGKFNEDRLKSARTVFQKENGTVTAPNASKLNDGGAALVLVSEAKLKQLGLKPLAKISGWGEAARTPFDFTIAPALAVPKAVKHAGLTVDRVDFFELNEAFSVVGLANAELVKIPLEKLNVYGGAVAMGHPLGCSGARIIVTLLSVLTQEGGRFGAAGVCNGGGGASAIVIEKIDSDAKL</sequence>
<feature type="initiator methionine" description="Removed" evidence="4">
    <location>
        <position position="1"/>
    </location>
</feature>
<feature type="chain" id="PRO_0000206414" description="Acetyl-CoA acetyltransferase IB">
    <location>
        <begin position="2"/>
        <end position="403"/>
    </location>
</feature>
<feature type="short sequence motif" description="Microbody targeting signal" evidence="2">
    <location>
        <begin position="401"/>
        <end position="403"/>
    </location>
</feature>
<feature type="active site" description="Acyl-thioester intermediate" evidence="1">
    <location>
        <position position="91"/>
    </location>
</feature>
<feature type="active site" description="Proton acceptor" evidence="3">
    <location>
        <position position="353"/>
    </location>
</feature>
<feature type="active site" description="Proton acceptor" evidence="3">
    <location>
        <position position="383"/>
    </location>
</feature>
<dbReference type="EC" id="2.3.1.9"/>
<dbReference type="EMBL" id="D13471">
    <property type="protein sequence ID" value="BAA02716.1"/>
    <property type="molecule type" value="Genomic_DNA"/>
</dbReference>
<dbReference type="SMR" id="Q04677"/>
<dbReference type="VEuPathDB" id="FungiDB:CTMYA2_016100"/>
<dbReference type="VEuPathDB" id="FungiDB:CTRG_01584"/>
<dbReference type="UniPathway" id="UPA00058">
    <property type="reaction ID" value="UER00101"/>
</dbReference>
<dbReference type="GO" id="GO:0005739">
    <property type="term" value="C:mitochondrion"/>
    <property type="evidence" value="ECO:0007669"/>
    <property type="project" value="TreeGrafter"/>
</dbReference>
<dbReference type="GO" id="GO:0005777">
    <property type="term" value="C:peroxisome"/>
    <property type="evidence" value="ECO:0007669"/>
    <property type="project" value="UniProtKB-SubCell"/>
</dbReference>
<dbReference type="GO" id="GO:0003985">
    <property type="term" value="F:acetyl-CoA C-acetyltransferase activity"/>
    <property type="evidence" value="ECO:0007669"/>
    <property type="project" value="UniProtKB-EC"/>
</dbReference>
<dbReference type="GO" id="GO:0006696">
    <property type="term" value="P:ergosterol biosynthetic process"/>
    <property type="evidence" value="ECO:0007669"/>
    <property type="project" value="TreeGrafter"/>
</dbReference>
<dbReference type="GO" id="GO:0006635">
    <property type="term" value="P:fatty acid beta-oxidation"/>
    <property type="evidence" value="ECO:0007669"/>
    <property type="project" value="TreeGrafter"/>
</dbReference>
<dbReference type="CDD" id="cd00751">
    <property type="entry name" value="thiolase"/>
    <property type="match status" value="1"/>
</dbReference>
<dbReference type="FunFam" id="3.40.47.10:FF:000007">
    <property type="entry name" value="acetyl-CoA acetyltransferase, mitochondrial"/>
    <property type="match status" value="1"/>
</dbReference>
<dbReference type="Gene3D" id="3.40.47.10">
    <property type="match status" value="1"/>
</dbReference>
<dbReference type="InterPro" id="IPR002155">
    <property type="entry name" value="Thiolase"/>
</dbReference>
<dbReference type="InterPro" id="IPR016039">
    <property type="entry name" value="Thiolase-like"/>
</dbReference>
<dbReference type="InterPro" id="IPR020615">
    <property type="entry name" value="Thiolase_acyl_enz_int_AS"/>
</dbReference>
<dbReference type="InterPro" id="IPR020610">
    <property type="entry name" value="Thiolase_AS"/>
</dbReference>
<dbReference type="InterPro" id="IPR020617">
    <property type="entry name" value="Thiolase_C"/>
</dbReference>
<dbReference type="InterPro" id="IPR020613">
    <property type="entry name" value="Thiolase_CS"/>
</dbReference>
<dbReference type="InterPro" id="IPR020616">
    <property type="entry name" value="Thiolase_N"/>
</dbReference>
<dbReference type="NCBIfam" id="TIGR01930">
    <property type="entry name" value="AcCoA-C-Actrans"/>
    <property type="match status" value="1"/>
</dbReference>
<dbReference type="PANTHER" id="PTHR18919:SF165">
    <property type="entry name" value="ACETYL-COA ACETYLTRANSFERASE"/>
    <property type="match status" value="1"/>
</dbReference>
<dbReference type="PANTHER" id="PTHR18919">
    <property type="entry name" value="ACETYL-COA C-ACYLTRANSFERASE"/>
    <property type="match status" value="1"/>
</dbReference>
<dbReference type="Pfam" id="PF02803">
    <property type="entry name" value="Thiolase_C"/>
    <property type="match status" value="1"/>
</dbReference>
<dbReference type="Pfam" id="PF00108">
    <property type="entry name" value="Thiolase_N"/>
    <property type="match status" value="1"/>
</dbReference>
<dbReference type="PIRSF" id="PIRSF000429">
    <property type="entry name" value="Ac-CoA_Ac_transf"/>
    <property type="match status" value="1"/>
</dbReference>
<dbReference type="SUPFAM" id="SSF53901">
    <property type="entry name" value="Thiolase-like"/>
    <property type="match status" value="2"/>
</dbReference>
<dbReference type="PROSITE" id="PS00098">
    <property type="entry name" value="THIOLASE_1"/>
    <property type="match status" value="1"/>
</dbReference>
<dbReference type="PROSITE" id="PS00737">
    <property type="entry name" value="THIOLASE_2"/>
    <property type="match status" value="1"/>
</dbReference>
<dbReference type="PROSITE" id="PS00099">
    <property type="entry name" value="THIOLASE_3"/>
    <property type="match status" value="1"/>
</dbReference>
<gene>
    <name type="primary">PACTB</name>
</gene>
<proteinExistence type="evidence at protein level"/>
<protein>
    <recommendedName>
        <fullName>Acetyl-CoA acetyltransferase IB</fullName>
        <ecNumber>2.3.1.9</ecNumber>
    </recommendedName>
    <alternativeName>
        <fullName>Peroxisomal acetoacetyl-CoA thiolase</fullName>
    </alternativeName>
    <alternativeName>
        <fullName>Thiolase IB</fullName>
    </alternativeName>
</protein>
<reference key="1">
    <citation type="journal article" date="1992" name="Eur. J. Biochem.">
        <title>Peroxisomal acetoacetyl-CoA thiolase of an n-alkane-utilizing yeast, Candida tropicalis.</title>
        <authorList>
            <person name="Kurihara T."/>
            <person name="Ueda M."/>
            <person name="Kanayama N."/>
            <person name="Kondo J."/>
            <person name="Teranishi Y."/>
            <person name="Tanaka A."/>
        </authorList>
    </citation>
    <scope>NUCLEOTIDE SEQUENCE [GENOMIC DNA]</scope>
    <scope>PROTEIN SEQUENCE OF 2-17; 209-233 AND 280-290</scope>
    <source>
        <strain>ATCC 20336 / pK233 / NCYC 997</strain>
    </source>
</reference>
<comment type="catalytic activity">
    <reaction evidence="3">
        <text>2 acetyl-CoA = acetoacetyl-CoA + CoA</text>
        <dbReference type="Rhea" id="RHEA:21036"/>
        <dbReference type="ChEBI" id="CHEBI:57286"/>
        <dbReference type="ChEBI" id="CHEBI:57287"/>
        <dbReference type="ChEBI" id="CHEBI:57288"/>
        <dbReference type="EC" id="2.3.1.9"/>
    </reaction>
</comment>
<comment type="pathway">
    <text>Metabolic intermediate biosynthesis; (R)-mevalonate biosynthesis; (R)-mevalonate from acetyl-CoA: step 1/3.</text>
</comment>
<comment type="subunit">
    <text evidence="1">Multimeric.</text>
</comment>
<comment type="subcellular location">
    <subcellularLocation>
        <location>Peroxisome</location>
    </subcellularLocation>
</comment>
<comment type="similarity">
    <text evidence="5">Belongs to the thiolase-like superfamily. Thiolase family.</text>
</comment>
<organism>
    <name type="scientific">Candida tropicalis</name>
    <name type="common">Yeast</name>
    <dbReference type="NCBI Taxonomy" id="5482"/>
    <lineage>
        <taxon>Eukaryota</taxon>
        <taxon>Fungi</taxon>
        <taxon>Dikarya</taxon>
        <taxon>Ascomycota</taxon>
        <taxon>Saccharomycotina</taxon>
        <taxon>Pichiomycetes</taxon>
        <taxon>Debaryomycetaceae</taxon>
        <taxon>Candida/Lodderomyces clade</taxon>
        <taxon>Candida</taxon>
    </lineage>
</organism>
<evidence type="ECO:0000250" key="1"/>
<evidence type="ECO:0000255" key="2"/>
<evidence type="ECO:0000255" key="3">
    <source>
        <dbReference type="PROSITE-ProRule" id="PRU10020"/>
    </source>
</evidence>
<evidence type="ECO:0000269" key="4">
    <source>
    </source>
</evidence>
<evidence type="ECO:0000305" key="5"/>
<accession>Q04677</accession>